<keyword id="KW-0175">Coiled coil</keyword>
<keyword id="KW-0378">Hydrolase</keyword>
<keyword id="KW-0540">Nuclease</keyword>
<keyword id="KW-0539">Nucleus</keyword>
<keyword id="KW-1185">Reference proteome</keyword>
<organism>
    <name type="scientific">Dictyostelium discoideum</name>
    <name type="common">Social amoeba</name>
    <dbReference type="NCBI Taxonomy" id="44689"/>
    <lineage>
        <taxon>Eukaryota</taxon>
        <taxon>Amoebozoa</taxon>
        <taxon>Evosea</taxon>
        <taxon>Eumycetozoa</taxon>
        <taxon>Dictyostelia</taxon>
        <taxon>Dictyosteliales</taxon>
        <taxon>Dictyosteliaceae</taxon>
        <taxon>Dictyostelium</taxon>
    </lineage>
</organism>
<gene>
    <name type="primary">rexo4</name>
    <name type="ORF">DDB_G0281327</name>
</gene>
<dbReference type="EC" id="3.1.-.-"/>
<dbReference type="EMBL" id="AAFI02000040">
    <property type="protein sequence ID" value="EAL66960.1"/>
    <property type="molecule type" value="Genomic_DNA"/>
</dbReference>
<dbReference type="RefSeq" id="XP_640882.1">
    <property type="nucleotide sequence ID" value="XM_635790.1"/>
</dbReference>
<dbReference type="SMR" id="Q54U94"/>
<dbReference type="FunCoup" id="Q54U94">
    <property type="interactions" value="700"/>
</dbReference>
<dbReference type="STRING" id="44689.Q54U94"/>
<dbReference type="PaxDb" id="44689-DDB0305008"/>
<dbReference type="EnsemblProtists" id="EAL66960">
    <property type="protein sequence ID" value="EAL66960"/>
    <property type="gene ID" value="DDB_G0281327"/>
</dbReference>
<dbReference type="GeneID" id="8622938"/>
<dbReference type="KEGG" id="ddi:DDB_G0281327"/>
<dbReference type="dictyBase" id="DDB_G0281327">
    <property type="gene designation" value="rexo4"/>
</dbReference>
<dbReference type="VEuPathDB" id="AmoebaDB:DDB_G0281327"/>
<dbReference type="eggNOG" id="KOG2249">
    <property type="taxonomic scope" value="Eukaryota"/>
</dbReference>
<dbReference type="HOGENOM" id="CLU_935163_0_0_1"/>
<dbReference type="InParanoid" id="Q54U94"/>
<dbReference type="OMA" id="RYKPLCK"/>
<dbReference type="PhylomeDB" id="Q54U94"/>
<dbReference type="PRO" id="PR:Q54U94"/>
<dbReference type="Proteomes" id="UP000002195">
    <property type="component" value="Chromosome 3"/>
</dbReference>
<dbReference type="GO" id="GO:0005634">
    <property type="term" value="C:nucleus"/>
    <property type="evidence" value="ECO:0000318"/>
    <property type="project" value="GO_Central"/>
</dbReference>
<dbReference type="GO" id="GO:0004527">
    <property type="term" value="F:exonuclease activity"/>
    <property type="evidence" value="ECO:0000318"/>
    <property type="project" value="GO_Central"/>
</dbReference>
<dbReference type="GO" id="GO:0003676">
    <property type="term" value="F:nucleic acid binding"/>
    <property type="evidence" value="ECO:0007669"/>
    <property type="project" value="InterPro"/>
</dbReference>
<dbReference type="GO" id="GO:0031125">
    <property type="term" value="P:rRNA 3'-end processing"/>
    <property type="evidence" value="ECO:0000318"/>
    <property type="project" value="GO_Central"/>
</dbReference>
<dbReference type="FunFam" id="3.30.420.10:FF:000376">
    <property type="match status" value="1"/>
</dbReference>
<dbReference type="Gene3D" id="3.30.420.10">
    <property type="entry name" value="Ribonuclease H-like superfamily/Ribonuclease H"/>
    <property type="match status" value="1"/>
</dbReference>
<dbReference type="InterPro" id="IPR013520">
    <property type="entry name" value="Exonuclease_RNaseT/DNA_pol3"/>
</dbReference>
<dbReference type="InterPro" id="IPR047021">
    <property type="entry name" value="REXO1/3/4-like"/>
</dbReference>
<dbReference type="InterPro" id="IPR012337">
    <property type="entry name" value="RNaseH-like_sf"/>
</dbReference>
<dbReference type="InterPro" id="IPR036397">
    <property type="entry name" value="RNaseH_sf"/>
</dbReference>
<dbReference type="PANTHER" id="PTHR12801:SF154">
    <property type="entry name" value="RNA EXONUCLEASE 4"/>
    <property type="match status" value="1"/>
</dbReference>
<dbReference type="PANTHER" id="PTHR12801">
    <property type="entry name" value="RNA EXONUCLEASE REXO1 / RECO3 FAMILY MEMBER-RELATED"/>
    <property type="match status" value="1"/>
</dbReference>
<dbReference type="Pfam" id="PF00929">
    <property type="entry name" value="RNase_T"/>
    <property type="match status" value="1"/>
</dbReference>
<dbReference type="SMART" id="SM00479">
    <property type="entry name" value="EXOIII"/>
    <property type="match status" value="1"/>
</dbReference>
<dbReference type="SUPFAM" id="SSF53098">
    <property type="entry name" value="Ribonuclease H-like"/>
    <property type="match status" value="1"/>
</dbReference>
<feature type="chain" id="PRO_0000330893" description="RNA exonuclease 4">
    <location>
        <begin position="1"/>
        <end position="298"/>
    </location>
</feature>
<feature type="domain" description="Exonuclease">
    <location>
        <begin position="125"/>
        <end position="275"/>
    </location>
</feature>
<feature type="coiled-coil region" evidence="2">
    <location>
        <begin position="1"/>
        <end position="73"/>
    </location>
</feature>
<accession>Q54U94</accession>
<comment type="subcellular location">
    <subcellularLocation>
        <location evidence="1">Nucleus</location>
    </subcellularLocation>
</comment>
<comment type="similarity">
    <text evidence="3">Belongs to the REXO4 family.</text>
</comment>
<proteinExistence type="inferred from homology"/>
<name>REXO4_DICDI</name>
<protein>
    <recommendedName>
        <fullName>RNA exonuclease 4</fullName>
        <ecNumber>3.1.-.-</ecNumber>
    </recommendedName>
</protein>
<sequence>MRKTVRKNKQVKRELALLEKEKEEIESFTKVSKTVENKQSINSNWNVTKEKIKNKNNAYQKKKEAKLKLKSATPYTSTKVIEEKKPHIKDFNQLCQEHNIISPIDDNLVSPTQKEIDNLNESSKFFSIDCKIIEIEGNKGTLGKVCIANQNGQIIYEKIVKPMDKIVDFRTKFTGLTRDKVQREGTDFLQVQKEVEKILRHKILVGHDLVHDLKNLKLAHKKKLLRDATQFTKFFNPDTNSEDSLKSIAKRELNFSPDNWDPNGKRDTIINVILYKQNQKEWEAFINNKFYGQPIDKN</sequence>
<reference key="1">
    <citation type="journal article" date="2005" name="Nature">
        <title>The genome of the social amoeba Dictyostelium discoideum.</title>
        <authorList>
            <person name="Eichinger L."/>
            <person name="Pachebat J.A."/>
            <person name="Gloeckner G."/>
            <person name="Rajandream M.A."/>
            <person name="Sucgang R."/>
            <person name="Berriman M."/>
            <person name="Song J."/>
            <person name="Olsen R."/>
            <person name="Szafranski K."/>
            <person name="Xu Q."/>
            <person name="Tunggal B."/>
            <person name="Kummerfeld S."/>
            <person name="Madera M."/>
            <person name="Konfortov B.A."/>
            <person name="Rivero F."/>
            <person name="Bankier A.T."/>
            <person name="Lehmann R."/>
            <person name="Hamlin N."/>
            <person name="Davies R."/>
            <person name="Gaudet P."/>
            <person name="Fey P."/>
            <person name="Pilcher K."/>
            <person name="Chen G."/>
            <person name="Saunders D."/>
            <person name="Sodergren E.J."/>
            <person name="Davis P."/>
            <person name="Kerhornou A."/>
            <person name="Nie X."/>
            <person name="Hall N."/>
            <person name="Anjard C."/>
            <person name="Hemphill L."/>
            <person name="Bason N."/>
            <person name="Farbrother P."/>
            <person name="Desany B."/>
            <person name="Just E."/>
            <person name="Morio T."/>
            <person name="Rost R."/>
            <person name="Churcher C.M."/>
            <person name="Cooper J."/>
            <person name="Haydock S."/>
            <person name="van Driessche N."/>
            <person name="Cronin A."/>
            <person name="Goodhead I."/>
            <person name="Muzny D.M."/>
            <person name="Mourier T."/>
            <person name="Pain A."/>
            <person name="Lu M."/>
            <person name="Harper D."/>
            <person name="Lindsay R."/>
            <person name="Hauser H."/>
            <person name="James K.D."/>
            <person name="Quiles M."/>
            <person name="Madan Babu M."/>
            <person name="Saito T."/>
            <person name="Buchrieser C."/>
            <person name="Wardroper A."/>
            <person name="Felder M."/>
            <person name="Thangavelu M."/>
            <person name="Johnson D."/>
            <person name="Knights A."/>
            <person name="Loulseged H."/>
            <person name="Mungall K.L."/>
            <person name="Oliver K."/>
            <person name="Price C."/>
            <person name="Quail M.A."/>
            <person name="Urushihara H."/>
            <person name="Hernandez J."/>
            <person name="Rabbinowitsch E."/>
            <person name="Steffen D."/>
            <person name="Sanders M."/>
            <person name="Ma J."/>
            <person name="Kohara Y."/>
            <person name="Sharp S."/>
            <person name="Simmonds M.N."/>
            <person name="Spiegler S."/>
            <person name="Tivey A."/>
            <person name="Sugano S."/>
            <person name="White B."/>
            <person name="Walker D."/>
            <person name="Woodward J.R."/>
            <person name="Winckler T."/>
            <person name="Tanaka Y."/>
            <person name="Shaulsky G."/>
            <person name="Schleicher M."/>
            <person name="Weinstock G.M."/>
            <person name="Rosenthal A."/>
            <person name="Cox E.C."/>
            <person name="Chisholm R.L."/>
            <person name="Gibbs R.A."/>
            <person name="Loomis W.F."/>
            <person name="Platzer M."/>
            <person name="Kay R.R."/>
            <person name="Williams J.G."/>
            <person name="Dear P.H."/>
            <person name="Noegel A.A."/>
            <person name="Barrell B.G."/>
            <person name="Kuspa A."/>
        </authorList>
    </citation>
    <scope>NUCLEOTIDE SEQUENCE [LARGE SCALE GENOMIC DNA]</scope>
    <source>
        <strain>AX4</strain>
    </source>
</reference>
<evidence type="ECO:0000250" key="1"/>
<evidence type="ECO:0000255" key="2"/>
<evidence type="ECO:0000305" key="3"/>